<reference key="1">
    <citation type="journal article" date="2010" name="Genome Biol.">
        <title>Structure and dynamics of the pan-genome of Streptococcus pneumoniae and closely related species.</title>
        <authorList>
            <person name="Donati C."/>
            <person name="Hiller N.L."/>
            <person name="Tettelin H."/>
            <person name="Muzzi A."/>
            <person name="Croucher N.J."/>
            <person name="Angiuoli S.V."/>
            <person name="Oggioni M."/>
            <person name="Dunning Hotopp J.C."/>
            <person name="Hu F.Z."/>
            <person name="Riley D.R."/>
            <person name="Covacci A."/>
            <person name="Mitchell T.J."/>
            <person name="Bentley S.D."/>
            <person name="Kilian M."/>
            <person name="Ehrlich G.D."/>
            <person name="Rappuoli R."/>
            <person name="Moxon E.R."/>
            <person name="Masignani V."/>
        </authorList>
    </citation>
    <scope>NUCLEOTIDE SEQUENCE [LARGE SCALE GENOMIC DNA]</scope>
    <source>
        <strain>P1031</strain>
    </source>
</reference>
<protein>
    <recommendedName>
        <fullName evidence="1">Nucleoside triphosphate/diphosphate phosphatase</fullName>
        <ecNumber evidence="1">3.6.1.15</ecNumber>
        <ecNumber evidence="1">3.6.1.6</ecNumber>
    </recommendedName>
</protein>
<evidence type="ECO:0000255" key="1">
    <source>
        <dbReference type="HAMAP-Rule" id="MF_01568"/>
    </source>
</evidence>
<organism>
    <name type="scientific">Streptococcus pneumoniae (strain P1031)</name>
    <dbReference type="NCBI Taxonomy" id="488223"/>
    <lineage>
        <taxon>Bacteria</taxon>
        <taxon>Bacillati</taxon>
        <taxon>Bacillota</taxon>
        <taxon>Bacilli</taxon>
        <taxon>Lactobacillales</taxon>
        <taxon>Streptococcaceae</taxon>
        <taxon>Streptococcus</taxon>
    </lineage>
</organism>
<keyword id="KW-0378">Hydrolase</keyword>
<keyword id="KW-0460">Magnesium</keyword>
<keyword id="KW-0479">Metal-binding</keyword>
<proteinExistence type="inferred from homology"/>
<dbReference type="EC" id="3.6.1.15" evidence="1"/>
<dbReference type="EC" id="3.6.1.6" evidence="1"/>
<dbReference type="EMBL" id="CP000920">
    <property type="protein sequence ID" value="ACO20192.1"/>
    <property type="molecule type" value="Genomic_DNA"/>
</dbReference>
<dbReference type="RefSeq" id="WP_000775321.1">
    <property type="nucleotide sequence ID" value="NC_012467.1"/>
</dbReference>
<dbReference type="SMR" id="C1CML6"/>
<dbReference type="KEGG" id="spp:SPP_1932"/>
<dbReference type="HOGENOM" id="CLU_109787_1_0_9"/>
<dbReference type="GO" id="GO:0000287">
    <property type="term" value="F:magnesium ion binding"/>
    <property type="evidence" value="ECO:0007669"/>
    <property type="project" value="UniProtKB-UniRule"/>
</dbReference>
<dbReference type="GO" id="GO:0017110">
    <property type="term" value="F:nucleoside diphosphate phosphatase activity"/>
    <property type="evidence" value="ECO:0007669"/>
    <property type="project" value="UniProtKB-UniRule"/>
</dbReference>
<dbReference type="GO" id="GO:0017111">
    <property type="term" value="F:ribonucleoside triphosphate phosphatase activity"/>
    <property type="evidence" value="ECO:0007669"/>
    <property type="project" value="UniProtKB-UniRule"/>
</dbReference>
<dbReference type="Gene3D" id="2.40.380.10">
    <property type="entry name" value="FomD-like"/>
    <property type="match status" value="1"/>
</dbReference>
<dbReference type="HAMAP" id="MF_01568">
    <property type="entry name" value="Ntdp"/>
    <property type="match status" value="1"/>
</dbReference>
<dbReference type="InterPro" id="IPR007295">
    <property type="entry name" value="DUF402"/>
</dbReference>
<dbReference type="InterPro" id="IPR035930">
    <property type="entry name" value="FomD-like_sf"/>
</dbReference>
<dbReference type="InterPro" id="IPR050212">
    <property type="entry name" value="Ntdp-like"/>
</dbReference>
<dbReference type="InterPro" id="IPR016882">
    <property type="entry name" value="SA1684"/>
</dbReference>
<dbReference type="NCBIfam" id="NF010183">
    <property type="entry name" value="PRK13662.1"/>
    <property type="match status" value="1"/>
</dbReference>
<dbReference type="PANTHER" id="PTHR39159">
    <property type="match status" value="1"/>
</dbReference>
<dbReference type="PANTHER" id="PTHR39159:SF1">
    <property type="entry name" value="UPF0374 PROTEIN YGAC"/>
    <property type="match status" value="1"/>
</dbReference>
<dbReference type="Pfam" id="PF04167">
    <property type="entry name" value="DUF402"/>
    <property type="match status" value="1"/>
</dbReference>
<dbReference type="PIRSF" id="PIRSF028345">
    <property type="entry name" value="UCP028345"/>
    <property type="match status" value="1"/>
</dbReference>
<dbReference type="SUPFAM" id="SSF159234">
    <property type="entry name" value="FomD-like"/>
    <property type="match status" value="1"/>
</dbReference>
<gene>
    <name type="ordered locus">SPP_1932</name>
</gene>
<accession>C1CML6</accession>
<comment type="function">
    <text evidence="1">Has nucleoside phosphatase activity towards nucleoside triphosphates and nucleoside diphosphates.</text>
</comment>
<comment type="catalytic activity">
    <reaction evidence="1">
        <text>a ribonucleoside 5'-triphosphate + H2O = a ribonucleoside 5'-diphosphate + phosphate + H(+)</text>
        <dbReference type="Rhea" id="RHEA:23680"/>
        <dbReference type="ChEBI" id="CHEBI:15377"/>
        <dbReference type="ChEBI" id="CHEBI:15378"/>
        <dbReference type="ChEBI" id="CHEBI:43474"/>
        <dbReference type="ChEBI" id="CHEBI:57930"/>
        <dbReference type="ChEBI" id="CHEBI:61557"/>
        <dbReference type="EC" id="3.6.1.15"/>
    </reaction>
</comment>
<comment type="catalytic activity">
    <reaction evidence="1">
        <text>a ribonucleoside 5'-diphosphate + H2O = a ribonucleoside 5'-phosphate + phosphate + H(+)</text>
        <dbReference type="Rhea" id="RHEA:36799"/>
        <dbReference type="ChEBI" id="CHEBI:15377"/>
        <dbReference type="ChEBI" id="CHEBI:15378"/>
        <dbReference type="ChEBI" id="CHEBI:43474"/>
        <dbReference type="ChEBI" id="CHEBI:57930"/>
        <dbReference type="ChEBI" id="CHEBI:58043"/>
        <dbReference type="EC" id="3.6.1.6"/>
    </reaction>
</comment>
<comment type="cofactor">
    <cofactor evidence="1">
        <name>Mg(2+)</name>
        <dbReference type="ChEBI" id="CHEBI:18420"/>
    </cofactor>
</comment>
<comment type="similarity">
    <text evidence="1">Belongs to the Ntdp family.</text>
</comment>
<sequence>MKLPKEGDFITIQSYKHDGSLHRTWRDTMVLKTTENAIIGVNDHTLVTESDGRRWVTREPAIVYFHKKYWFNIIAMIRDNGTSYYCNMASPYYLDEEALKYIDYDLDVKIFTDGEKRLLDVEEYERHKRKMNYSDDLDYILKEHVKILVDWINNGRGPFSEAYVNIWYKRYVELKNR</sequence>
<feature type="chain" id="PRO_1000185479" description="Nucleoside triphosphate/diphosphate phosphatase">
    <location>
        <begin position="1"/>
        <end position="177"/>
    </location>
</feature>
<feature type="active site" description="Proton donor" evidence="1">
    <location>
        <position position="23"/>
    </location>
</feature>
<feature type="binding site" evidence="1">
    <location>
        <position position="87"/>
    </location>
    <ligand>
        <name>Mg(2+)</name>
        <dbReference type="ChEBI" id="CHEBI:18420"/>
        <label>1</label>
    </ligand>
</feature>
<feature type="binding site" evidence="1">
    <location>
        <position position="103"/>
    </location>
    <ligand>
        <name>Mg(2+)</name>
        <dbReference type="ChEBI" id="CHEBI:18420"/>
        <label>1</label>
    </ligand>
</feature>
<feature type="binding site" evidence="1">
    <location>
        <position position="105"/>
    </location>
    <ligand>
        <name>Mg(2+)</name>
        <dbReference type="ChEBI" id="CHEBI:18420"/>
        <label>2</label>
    </ligand>
</feature>
<feature type="binding site" evidence="1">
    <location>
        <position position="107"/>
    </location>
    <ligand>
        <name>Mg(2+)</name>
        <dbReference type="ChEBI" id="CHEBI:18420"/>
        <label>1</label>
    </ligand>
</feature>
<feature type="binding site" evidence="1">
    <location>
        <position position="107"/>
    </location>
    <ligand>
        <name>Mg(2+)</name>
        <dbReference type="ChEBI" id="CHEBI:18420"/>
        <label>2</label>
    </ligand>
</feature>
<feature type="binding site" evidence="1">
    <location>
        <position position="120"/>
    </location>
    <ligand>
        <name>Mg(2+)</name>
        <dbReference type="ChEBI" id="CHEBI:18420"/>
        <label>2</label>
    </ligand>
</feature>
<feature type="binding site" evidence="1">
    <location>
        <position position="123"/>
    </location>
    <ligand>
        <name>Mg(2+)</name>
        <dbReference type="ChEBI" id="CHEBI:18420"/>
        <label>2</label>
    </ligand>
</feature>
<name>NTDP_STRZP</name>